<organism>
    <name type="scientific">Mycoplasma pneumoniae (strain ATCC 29342 / M129 / Subtype 1)</name>
    <name type="common">Mycoplasmoides pneumoniae</name>
    <dbReference type="NCBI Taxonomy" id="272634"/>
    <lineage>
        <taxon>Bacteria</taxon>
        <taxon>Bacillati</taxon>
        <taxon>Mycoplasmatota</taxon>
        <taxon>Mycoplasmoidales</taxon>
        <taxon>Mycoplasmoidaceae</taxon>
        <taxon>Mycoplasmoides</taxon>
    </lineage>
</organism>
<proteinExistence type="inferred from homology"/>
<evidence type="ECO:0000250" key="1">
    <source>
        <dbReference type="UniProtKB" id="P0AER0"/>
    </source>
</evidence>
<evidence type="ECO:0000255" key="2"/>
<evidence type="ECO:0000305" key="3"/>
<reference key="1">
    <citation type="journal article" date="1996" name="Nucleic Acids Res.">
        <title>Complete sequence analysis of the genome of the bacterium Mycoplasma pneumoniae.</title>
        <authorList>
            <person name="Himmelreich R."/>
            <person name="Hilbert H."/>
            <person name="Plagens H."/>
            <person name="Pirkl E."/>
            <person name="Li B.-C."/>
            <person name="Herrmann R."/>
        </authorList>
    </citation>
    <scope>NUCLEOTIDE SEQUENCE [LARGE SCALE GENOMIC DNA]</scope>
    <source>
        <strain>ATCC 29342 / M129 / Subtype 1</strain>
    </source>
</reference>
<comment type="function">
    <text evidence="1">Mediates glycerol diffusion across the cytoplasmic membrane via a pore-type mechanism.</text>
</comment>
<comment type="catalytic activity">
    <reaction evidence="1">
        <text>glycerol(in) = glycerol(out)</text>
        <dbReference type="Rhea" id="RHEA:29675"/>
        <dbReference type="ChEBI" id="CHEBI:17754"/>
    </reaction>
</comment>
<comment type="subcellular location">
    <subcellularLocation>
        <location evidence="3">Cell membrane</location>
        <topology evidence="2">Multi-pass membrane protein</topology>
    </subcellularLocation>
</comment>
<comment type="domain">
    <text evidence="3">Aquaporins contain two tandem repeats each containing three membrane-spanning domains and a pore-forming loop with the signature motif Asn-Pro-Ala (NPA).</text>
</comment>
<comment type="similarity">
    <text evidence="3">Belongs to the MIP/aquaporin (TC 1.A.8) family.</text>
</comment>
<dbReference type="EMBL" id="U00089">
    <property type="protein sequence ID" value="AAB95759.1"/>
    <property type="molecule type" value="Genomic_DNA"/>
</dbReference>
<dbReference type="PIR" id="S73437">
    <property type="entry name" value="S73437"/>
</dbReference>
<dbReference type="RefSeq" id="NP_109731.1">
    <property type="nucleotide sequence ID" value="NC_000912.1"/>
</dbReference>
<dbReference type="RefSeq" id="WP_010874400.1">
    <property type="nucleotide sequence ID" value="NC_000912.1"/>
</dbReference>
<dbReference type="SMR" id="P75071"/>
<dbReference type="STRING" id="272634.MPN_043"/>
<dbReference type="EnsemblBacteria" id="AAB95759">
    <property type="protein sequence ID" value="AAB95759"/>
    <property type="gene ID" value="MPN_043"/>
</dbReference>
<dbReference type="KEGG" id="mpn:MPN_043"/>
<dbReference type="PATRIC" id="fig|272634.6.peg.42"/>
<dbReference type="HOGENOM" id="CLU_020019_9_2_14"/>
<dbReference type="OrthoDB" id="9807293at2"/>
<dbReference type="BioCyc" id="MPNE272634:G1GJ3-59-MONOMER"/>
<dbReference type="Proteomes" id="UP000000808">
    <property type="component" value="Chromosome"/>
</dbReference>
<dbReference type="GO" id="GO:0005886">
    <property type="term" value="C:plasma membrane"/>
    <property type="evidence" value="ECO:0007669"/>
    <property type="project" value="UniProtKB-SubCell"/>
</dbReference>
<dbReference type="GO" id="GO:0015254">
    <property type="term" value="F:glycerol channel activity"/>
    <property type="evidence" value="ECO:0007669"/>
    <property type="project" value="TreeGrafter"/>
</dbReference>
<dbReference type="Gene3D" id="1.20.1080.10">
    <property type="entry name" value="Glycerol uptake facilitator protein"/>
    <property type="match status" value="1"/>
</dbReference>
<dbReference type="InterPro" id="IPR023271">
    <property type="entry name" value="Aquaporin-like"/>
</dbReference>
<dbReference type="InterPro" id="IPR000425">
    <property type="entry name" value="MIP"/>
</dbReference>
<dbReference type="InterPro" id="IPR050363">
    <property type="entry name" value="MIP/Aquaporin"/>
</dbReference>
<dbReference type="InterPro" id="IPR022357">
    <property type="entry name" value="MIP_CS"/>
</dbReference>
<dbReference type="PANTHER" id="PTHR43829">
    <property type="entry name" value="AQUAPORIN OR AQUAGLYCEROPORIN RELATED"/>
    <property type="match status" value="1"/>
</dbReference>
<dbReference type="PANTHER" id="PTHR43829:SF9">
    <property type="entry name" value="AQUAPORIN-9"/>
    <property type="match status" value="1"/>
</dbReference>
<dbReference type="Pfam" id="PF00230">
    <property type="entry name" value="MIP"/>
    <property type="match status" value="1"/>
</dbReference>
<dbReference type="PRINTS" id="PR00783">
    <property type="entry name" value="MINTRINSICP"/>
</dbReference>
<dbReference type="SUPFAM" id="SSF81338">
    <property type="entry name" value="Aquaporin-like"/>
    <property type="match status" value="1"/>
</dbReference>
<dbReference type="PROSITE" id="PS00221">
    <property type="entry name" value="MIP"/>
    <property type="match status" value="1"/>
</dbReference>
<sequence length="264" mass="28305">MFNLSDFSELPRWIGAEFLGTFFLILSGNGAGSQLTLNKMFAKESKAKLLTAAFAWGIAVLVGVLIANSLFEGAGNINPAVSLFYAVSGTIQKALYPLHVNFSIPLLWVALLLAWVAQFAGAMLAQALLNFLFWKHIEQTDPQSVLVTHCTNPAIFNIPRNFATEFVATSVLIASLLVAGSFGANRFDQSPRGVVPMLVVTGLIMSFGAATGTAINPARDLGPRIVYWLSPIKNKDPNLKYSWIPVAAPLSASVILGVLVAVIV</sequence>
<accession>P75071</accession>
<keyword id="KW-1003">Cell membrane</keyword>
<keyword id="KW-0472">Membrane</keyword>
<keyword id="KW-1185">Reference proteome</keyword>
<keyword id="KW-0677">Repeat</keyword>
<keyword id="KW-0812">Transmembrane</keyword>
<keyword id="KW-1133">Transmembrane helix</keyword>
<keyword id="KW-0813">Transport</keyword>
<name>GLPF_MYCPN</name>
<protein>
    <recommendedName>
        <fullName evidence="1">Probable glycerol uptake facilitator protein</fullName>
    </recommendedName>
</protein>
<feature type="chain" id="PRO_0000064088" description="Probable glycerol uptake facilitator protein">
    <location>
        <begin position="1"/>
        <end position="264"/>
    </location>
</feature>
<feature type="transmembrane region" description="Helical" evidence="2">
    <location>
        <begin position="13"/>
        <end position="33"/>
    </location>
</feature>
<feature type="transmembrane region" description="Helical" evidence="2">
    <location>
        <begin position="51"/>
        <end position="71"/>
    </location>
</feature>
<feature type="transmembrane region" description="Helical" evidence="2">
    <location>
        <begin position="104"/>
        <end position="124"/>
    </location>
</feature>
<feature type="transmembrane region" description="Helical" evidence="2">
    <location>
        <begin position="162"/>
        <end position="182"/>
    </location>
</feature>
<feature type="transmembrane region" description="Helical" evidence="2">
    <location>
        <begin position="195"/>
        <end position="215"/>
    </location>
</feature>
<feature type="transmembrane region" description="Helical" evidence="2">
    <location>
        <begin position="244"/>
        <end position="264"/>
    </location>
</feature>
<feature type="short sequence motif" description="NPA 1" evidence="3">
    <location>
        <begin position="78"/>
        <end position="80"/>
    </location>
</feature>
<feature type="short sequence motif" description="NPA 2" evidence="3">
    <location>
        <begin position="216"/>
        <end position="218"/>
    </location>
</feature>
<gene>
    <name type="primary">glpF</name>
    <name type="ordered locus">MPN_043</name>
    <name type="ORF">MP111</name>
</gene>